<dbReference type="SMR" id="P0CE36"/>
<dbReference type="GO" id="GO:0005576">
    <property type="term" value="C:extracellular region"/>
    <property type="evidence" value="ECO:0007669"/>
    <property type="project" value="UniProtKB-SubCell"/>
</dbReference>
<dbReference type="GO" id="GO:0035792">
    <property type="term" value="C:host cell postsynaptic membrane"/>
    <property type="evidence" value="ECO:0007669"/>
    <property type="project" value="UniProtKB-KW"/>
</dbReference>
<dbReference type="GO" id="GO:0030550">
    <property type="term" value="F:acetylcholine receptor inhibitor activity"/>
    <property type="evidence" value="ECO:0007669"/>
    <property type="project" value="UniProtKB-KW"/>
</dbReference>
<dbReference type="GO" id="GO:0099106">
    <property type="term" value="F:ion channel regulator activity"/>
    <property type="evidence" value="ECO:0007669"/>
    <property type="project" value="UniProtKB-KW"/>
</dbReference>
<dbReference type="GO" id="GO:0090729">
    <property type="term" value="F:toxin activity"/>
    <property type="evidence" value="ECO:0007669"/>
    <property type="project" value="UniProtKB-KW"/>
</dbReference>
<evidence type="ECO:0000250" key="1"/>
<evidence type="ECO:0000250" key="2">
    <source>
        <dbReference type="UniProtKB" id="A0A0A0VBX4"/>
    </source>
</evidence>
<evidence type="ECO:0000250" key="3">
    <source>
        <dbReference type="UniProtKB" id="C3VVN5"/>
    </source>
</evidence>
<evidence type="ECO:0000250" key="4">
    <source>
        <dbReference type="UniProtKB" id="P0C1W6"/>
    </source>
</evidence>
<evidence type="ECO:0000255" key="5"/>
<evidence type="ECO:0000303" key="6">
    <source>
    </source>
</evidence>
<evidence type="ECO:0000305" key="7"/>
<evidence type="ECO:0000305" key="8">
    <source>
    </source>
</evidence>
<reference key="1">
    <citation type="journal article" date="2009" name="Biochemistry">
        <title>Novel alpha D-conopeptides and their precursors identified by cDNA cloning define the D-conotoxin superfamily.</title>
        <authorList>
            <person name="Loughnan M.L."/>
            <person name="Nicke A."/>
            <person name="Lawrence N."/>
            <person name="Lewis R.J."/>
        </authorList>
    </citation>
    <scope>NUCLEOTIDE SEQUENCE [MRNA]</scope>
    <source>
        <strain>C.vitulinus</strain>
        <tissue>Venom duct</tissue>
    </source>
</reference>
<name>CXAT1_CONPO</name>
<organism>
    <name type="scientific">Conus planorbis</name>
    <name type="common">Planorbis cone</name>
    <dbReference type="NCBI Taxonomy" id="97183"/>
    <lineage>
        <taxon>Eukaryota</taxon>
        <taxon>Metazoa</taxon>
        <taxon>Spiralia</taxon>
        <taxon>Lophotrochozoa</taxon>
        <taxon>Mollusca</taxon>
        <taxon>Gastropoda</taxon>
        <taxon>Caenogastropoda</taxon>
        <taxon>Neogastropoda</taxon>
        <taxon>Conoidea</taxon>
        <taxon>Conidae</taxon>
        <taxon>Conus</taxon>
        <taxon>Strategoconus</taxon>
    </lineage>
</organism>
<comment type="function">
    <text evidence="4">Alpha-conotoxins act on postsynaptic membranes, they bind to the nicotinic acetylcholine receptors (nAChR) and thus inhibit them. Through its two C-terminal domains, this homodimeric protein would bind to two nAChR allosteric sites, located outside the nAChR C-loop of the principal binding face and at the adjacent binding interface in a clockwise direction. This toxin specifically blocks mammalian neuronal nAChR of the alpha-7/CHRNA7, alpha-3-beta-2/CHRNA3-CHRNB2 and alpha-4-beta-2/CHRNA4-CHRNB2 subtypes.</text>
</comment>
<comment type="subunit">
    <text evidence="3">Hetero-, homo- or pseudo-homodimer (identical sequence, different post-translational modifications).</text>
</comment>
<comment type="subcellular location">
    <subcellularLocation>
        <location evidence="8">Secreted</location>
    </subcellularLocation>
</comment>
<comment type="tissue specificity">
    <text evidence="8">Expressed by the venom duct.</text>
</comment>
<comment type="domain">
    <text evidence="7">The cysteine framework is XX (C-CC-C-CC-C-C-C-C).</text>
</comment>
<comment type="domain">
    <text evidence="4">Displays a mini-granulin fold, a structure composed of two short, stacked beta-hairpins connected by two parallel disulfide bonds. This newly described fold is derived from the same cysteine connectivity as knottins (ICK fold). The name 'mini-granulin fold' comes from the structural homology with the N-terminal region of the human granulin.</text>
</comment>
<comment type="similarity">
    <text evidence="7">Belongs to the conotoxin D superfamily.</text>
</comment>
<comment type="caution">
    <text evidence="7">The status of C.vitulinus is unclear.</text>
</comment>
<feature type="signal peptide" evidence="5">
    <location>
        <begin position="1"/>
        <end position="25"/>
    </location>
</feature>
<feature type="propeptide" id="PRO_0000391830" evidence="1">
    <location>
        <begin position="26"/>
        <end position="44"/>
    </location>
</feature>
<feature type="chain" id="PRO_0000391831" description="Alpha-conotoxin-like Vt20.1">
    <location>
        <begin position="45"/>
        <end position="94"/>
    </location>
</feature>
<feature type="modified residue" description="4-carboxyglutamate" evidence="1">
    <location>
        <position position="47"/>
    </location>
</feature>
<feature type="modified residue" description="4-carboxyglutamate" evidence="1">
    <location>
        <position position="49"/>
    </location>
</feature>
<feature type="disulfide bond" description="Interchain (with C-63)" evidence="2">
    <location>
        <position position="50"/>
    </location>
</feature>
<feature type="disulfide bond" description="Interchain (with C-51)" evidence="2">
    <location>
        <position position="62"/>
    </location>
</feature>
<feature type="disulfide bond" evidence="2">
    <location>
        <begin position="63"/>
        <end position="72"/>
    </location>
</feature>
<feature type="disulfide bond" evidence="2">
    <location>
        <begin position="68"/>
        <end position="80"/>
    </location>
</feature>
<feature type="disulfide bond" evidence="2">
    <location>
        <begin position="73"/>
        <end position="90"/>
    </location>
</feature>
<feature type="disulfide bond" evidence="2">
    <location>
        <begin position="78"/>
        <end position="92"/>
    </location>
</feature>
<accession>P0CE36</accession>
<protein>
    <recommendedName>
        <fullName evidence="6">Alpha-conotoxin-like Vt20.1</fullName>
    </recommendedName>
</protein>
<sequence>MPKLAVVLLVLLILPLSYFDAGGQAVQGDWRGNRLARDLQRGGRDDESECIINTRDSPWGRCCRTRMCGSMCCPRNGCTCVYHWRRGHGCSCPG</sequence>
<proteinExistence type="inferred from homology"/>
<keyword id="KW-0008">Acetylcholine receptor inhibiting toxin</keyword>
<keyword id="KW-1015">Disulfide bond</keyword>
<keyword id="KW-0301">Gamma-carboxyglutamic acid</keyword>
<keyword id="KW-0872">Ion channel impairing toxin</keyword>
<keyword id="KW-0528">Neurotoxin</keyword>
<keyword id="KW-0629">Postsynaptic neurotoxin</keyword>
<keyword id="KW-0964">Secreted</keyword>
<keyword id="KW-0732">Signal</keyword>
<keyword id="KW-0800">Toxin</keyword>